<feature type="signal peptide" evidence="3">
    <location>
        <begin position="1"/>
        <end position="19"/>
    </location>
</feature>
<feature type="chain" id="PRO_0000145100" description="Deoxyribonuclease-2-alpha">
    <location>
        <begin position="20"/>
        <end position="365"/>
    </location>
</feature>
<feature type="active site" evidence="1">
    <location>
        <position position="298"/>
    </location>
</feature>
<feature type="glycosylation site" description="N-linked (GlcNAc...) asparagine" evidence="3">
    <location>
        <position position="215"/>
    </location>
</feature>
<feature type="glycosylation site" description="N-linked (GlcNAc...) asparagine" evidence="3">
    <location>
        <position position="269"/>
    </location>
</feature>
<feature type="glycosylation site" description="N-linked (GlcNAc...) asparagine" evidence="3">
    <location>
        <position position="293"/>
    </location>
</feature>
<feature type="disulfide bond" evidence="3">
    <location>
        <begin position="22"/>
        <end position="162"/>
    </location>
</feature>
<feature type="disulfide bond" evidence="3">
    <location>
        <begin position="270"/>
        <end position="348"/>
    </location>
</feature>
<feature type="disulfide bond" evidence="3">
    <location>
        <begin position="311"/>
        <end position="330"/>
    </location>
</feature>
<feature type="sequence conflict" description="In Ref. 2; AAC77367." evidence="4" ref="2">
    <original>V</original>
    <variation>A</variation>
    <location>
        <position position="146"/>
    </location>
</feature>
<feature type="sequence conflict" description="In Ref. 2; AAC77367." evidence="4" ref="2">
    <original>A</original>
    <variation>G</variation>
    <location>
        <position position="194"/>
    </location>
</feature>
<feature type="sequence conflict" description="In Ref. 2; AAC77367." evidence="4" ref="2">
    <original>S</original>
    <variation>A</variation>
    <location>
        <position position="247"/>
    </location>
</feature>
<gene>
    <name type="primary">DNASE2</name>
    <name type="synonym">DNASE2A</name>
    <name type="synonym">DNL2</name>
</gene>
<name>DNS2A_BOVIN</name>
<keyword id="KW-0053">Apoptosis</keyword>
<keyword id="KW-0217">Developmental protein</keyword>
<keyword id="KW-1015">Disulfide bond</keyword>
<keyword id="KW-0255">Endonuclease</keyword>
<keyword id="KW-0325">Glycoprotein</keyword>
<keyword id="KW-0378">Hydrolase</keyword>
<keyword id="KW-0458">Lysosome</keyword>
<keyword id="KW-0540">Nuclease</keyword>
<keyword id="KW-1185">Reference proteome</keyword>
<keyword id="KW-0732">Signal</keyword>
<reference key="1">
    <citation type="submission" date="2006-06" db="EMBL/GenBank/DDBJ databases">
        <authorList>
            <consortium name="NIH - Mammalian Gene Collection (MGC) project"/>
        </authorList>
    </citation>
    <scope>NUCLEOTIDE SEQUENCE [LARGE SCALE MRNA]</scope>
    <source>
        <strain>Hereford</strain>
        <tissue>Fetal lung</tissue>
    </source>
</reference>
<reference key="2">
    <citation type="submission" date="1998-02" db="EMBL/GenBank/DDBJ databases">
        <authorList>
            <person name="Krieser R.J."/>
            <person name="Eastman A."/>
        </authorList>
    </citation>
    <scope>NUCLEOTIDE SEQUENCE [MRNA] OF 90-365</scope>
    <source>
        <tissue>Spleen</tissue>
    </source>
</reference>
<sequence>MATLSSLLLTALLWVPVGTLTCYGDSGQPVDWFVVYKLPAHTGSGDATQNGLRYKYFDEHSEDWSDGVGFINSTTGAVGRSLLPLYRNNNSQLAFVLYNDQPPKSSESKDSSSRGHTKGVLLLDQEGGFWLIHSVPNFPPRASSAVYSWPPGAQKYGQTLICVSFPLTQFLDISKQLTYTYPLVYDHRLEGDFAQKFPYLEEVVKGHHVRQGPWNSSVTLTSKKGATFQSFAKFGNFGDDLYSGWLSEALGSTLQVQFWQRSSGILPSNCSGAQHVFDVTQTAFPGPAGPAFNATEDHSKWCVTPKGPWACVGDMNRNQREEHRGGGTLCAQMLWKAFKPLVKAWEPCEKKSRAYSLGSPAGLWT</sequence>
<proteinExistence type="evidence at transcript level"/>
<organism>
    <name type="scientific">Bos taurus</name>
    <name type="common">Bovine</name>
    <dbReference type="NCBI Taxonomy" id="9913"/>
    <lineage>
        <taxon>Eukaryota</taxon>
        <taxon>Metazoa</taxon>
        <taxon>Chordata</taxon>
        <taxon>Craniata</taxon>
        <taxon>Vertebrata</taxon>
        <taxon>Euteleostomi</taxon>
        <taxon>Mammalia</taxon>
        <taxon>Eutheria</taxon>
        <taxon>Laurasiatheria</taxon>
        <taxon>Artiodactyla</taxon>
        <taxon>Ruminantia</taxon>
        <taxon>Pecora</taxon>
        <taxon>Bovidae</taxon>
        <taxon>Bovinae</taxon>
        <taxon>Bos</taxon>
    </lineage>
</organism>
<comment type="function">
    <text evidence="2">Hydrolyzes DNA under acidic conditions with a preference for double-stranded DNA. Plays a major role in the clearance of nucleic acids generated through apoptosis, hence preventing autoinflammation. Necessary for proper fetal development and for definitive erythropoiesis in fetal liver and bone marrow, where it degrades nuclear DNA expelled from erythroid precursor cells.</text>
</comment>
<comment type="catalytic activity">
    <reaction evidence="2">
        <text>Endonucleolytic cleavage to nucleoside 3'-phosphates and 3'-phosphooligonucleotide end-products.</text>
        <dbReference type="EC" id="3.1.22.1"/>
    </reaction>
</comment>
<comment type="subcellular location">
    <subcellularLocation>
        <location evidence="1">Lysosome</location>
    </subcellularLocation>
</comment>
<comment type="similarity">
    <text evidence="4">Belongs to the DNase II family.</text>
</comment>
<evidence type="ECO:0000250" key="1"/>
<evidence type="ECO:0000250" key="2">
    <source>
        <dbReference type="UniProtKB" id="O00115"/>
    </source>
</evidence>
<evidence type="ECO:0000255" key="3"/>
<evidence type="ECO:0000305" key="4"/>
<accession>P56541</accession>
<accession>O46614</accession>
<accession>Q17QD1</accession>
<protein>
    <recommendedName>
        <fullName>Deoxyribonuclease-2-alpha</fullName>
        <ecNumber>3.1.22.1</ecNumber>
    </recommendedName>
    <alternativeName>
        <fullName>Acid DNase</fullName>
    </alternativeName>
    <alternativeName>
        <fullName>Deoxyribonuclease II alpha</fullName>
        <shortName>DNase II alpha</shortName>
    </alternativeName>
    <alternativeName>
        <fullName>Lysosomal DNase II</fullName>
    </alternativeName>
</protein>
<dbReference type="EC" id="3.1.22.1"/>
<dbReference type="EMBL" id="BC118429">
    <property type="protein sequence ID" value="AAI18430.1"/>
    <property type="molecule type" value="mRNA"/>
</dbReference>
<dbReference type="EMBL" id="AF047017">
    <property type="protein sequence ID" value="AAC77367.1"/>
    <property type="molecule type" value="mRNA"/>
</dbReference>
<dbReference type="RefSeq" id="NP_001068595.1">
    <property type="nucleotide sequence ID" value="NM_001075127.2"/>
</dbReference>
<dbReference type="SMR" id="P56541"/>
<dbReference type="FunCoup" id="P56541">
    <property type="interactions" value="627"/>
</dbReference>
<dbReference type="STRING" id="9913.ENSBTAP00000007993"/>
<dbReference type="GlyCosmos" id="P56541">
    <property type="glycosylation" value="3 sites, No reported glycans"/>
</dbReference>
<dbReference type="GlyGen" id="P56541">
    <property type="glycosylation" value="3 sites"/>
</dbReference>
<dbReference type="PaxDb" id="9913-ENSBTAP00000007993"/>
<dbReference type="GeneID" id="282218"/>
<dbReference type="KEGG" id="bta:282218"/>
<dbReference type="CTD" id="1777"/>
<dbReference type="eggNOG" id="KOG3825">
    <property type="taxonomic scope" value="Eukaryota"/>
</dbReference>
<dbReference type="InParanoid" id="P56541"/>
<dbReference type="OrthoDB" id="10261598at2759"/>
<dbReference type="BRENDA" id="3.1.22.1">
    <property type="organism ID" value="908"/>
</dbReference>
<dbReference type="Proteomes" id="UP000009136">
    <property type="component" value="Unplaced"/>
</dbReference>
<dbReference type="GO" id="GO:0005764">
    <property type="term" value="C:lysosome"/>
    <property type="evidence" value="ECO:0007669"/>
    <property type="project" value="UniProtKB-SubCell"/>
</dbReference>
<dbReference type="GO" id="GO:0004531">
    <property type="term" value="F:deoxyribonuclease II activity"/>
    <property type="evidence" value="ECO:0000318"/>
    <property type="project" value="GO_Central"/>
</dbReference>
<dbReference type="GO" id="GO:0006309">
    <property type="term" value="P:apoptotic DNA fragmentation"/>
    <property type="evidence" value="ECO:0000318"/>
    <property type="project" value="GO_Central"/>
</dbReference>
<dbReference type="InterPro" id="IPR004947">
    <property type="entry name" value="DNase_II"/>
</dbReference>
<dbReference type="PANTHER" id="PTHR10858">
    <property type="entry name" value="DEOXYRIBONUCLEASE II"/>
    <property type="match status" value="1"/>
</dbReference>
<dbReference type="PANTHER" id="PTHR10858:SF9">
    <property type="entry name" value="DEOXYRIBONUCLEASE-2-ALPHA"/>
    <property type="match status" value="1"/>
</dbReference>
<dbReference type="Pfam" id="PF03265">
    <property type="entry name" value="DNase_II"/>
    <property type="match status" value="1"/>
</dbReference>